<organism>
    <name type="scientific">Rattus norvegicus</name>
    <name type="common">Rat</name>
    <dbReference type="NCBI Taxonomy" id="10116"/>
    <lineage>
        <taxon>Eukaryota</taxon>
        <taxon>Metazoa</taxon>
        <taxon>Chordata</taxon>
        <taxon>Craniata</taxon>
        <taxon>Vertebrata</taxon>
        <taxon>Euteleostomi</taxon>
        <taxon>Mammalia</taxon>
        <taxon>Eutheria</taxon>
        <taxon>Euarchontoglires</taxon>
        <taxon>Glires</taxon>
        <taxon>Rodentia</taxon>
        <taxon>Myomorpha</taxon>
        <taxon>Muroidea</taxon>
        <taxon>Muridae</taxon>
        <taxon>Murinae</taxon>
        <taxon>Rattus</taxon>
    </lineage>
</organism>
<gene>
    <name type="primary">Glt8d1</name>
</gene>
<reference key="1">
    <citation type="journal article" date="2004" name="Genome Res.">
        <title>The status, quality, and expansion of the NIH full-length cDNA project: the Mammalian Gene Collection (MGC).</title>
        <authorList>
            <consortium name="The MGC Project Team"/>
        </authorList>
    </citation>
    <scope>NUCLEOTIDE SEQUENCE [LARGE SCALE MRNA]</scope>
    <source>
        <tissue>Lung</tissue>
    </source>
</reference>
<feature type="chain" id="PRO_0000288530" description="Glycosyltransferase 8 domain-containing protein 1">
    <location>
        <begin position="1"/>
        <end position="371"/>
    </location>
</feature>
<feature type="topological domain" description="Cytoplasmic" evidence="1">
    <location>
        <begin position="1"/>
        <end position="5"/>
    </location>
</feature>
<feature type="transmembrane region" description="Helical; Signal-anchor for type II membrane protein" evidence="1">
    <location>
        <begin position="6"/>
        <end position="26"/>
    </location>
</feature>
<feature type="topological domain" description="Lumenal" evidence="1">
    <location>
        <begin position="27"/>
        <end position="371"/>
    </location>
</feature>
<feature type="glycosylation site" description="N-linked (GlcNAc...) asparagine" evidence="1">
    <location>
        <position position="257"/>
    </location>
</feature>
<accession>Q6AYF6</accession>
<keyword id="KW-0325">Glycoprotein</keyword>
<keyword id="KW-0328">Glycosyltransferase</keyword>
<keyword id="KW-0472">Membrane</keyword>
<keyword id="KW-1185">Reference proteome</keyword>
<keyword id="KW-0735">Signal-anchor</keyword>
<keyword id="KW-0808">Transferase</keyword>
<keyword id="KW-0812">Transmembrane</keyword>
<keyword id="KW-1133">Transmembrane helix</keyword>
<protein>
    <recommendedName>
        <fullName>Glycosyltransferase 8 domain-containing protein 1</fullName>
        <ecNumber>2.4.1.-</ecNumber>
    </recommendedName>
</protein>
<name>GL8D1_RAT</name>
<dbReference type="EC" id="2.4.1.-"/>
<dbReference type="EMBL" id="BC079066">
    <property type="protein sequence ID" value="AAH79066.1"/>
    <property type="molecule type" value="mRNA"/>
</dbReference>
<dbReference type="RefSeq" id="NP_001007684.1">
    <property type="nucleotide sequence ID" value="NM_001007683.1"/>
</dbReference>
<dbReference type="RefSeq" id="XP_063131363.1">
    <property type="nucleotide sequence ID" value="XM_063275293.1"/>
</dbReference>
<dbReference type="RefSeq" id="XP_063131364.1">
    <property type="nucleotide sequence ID" value="XM_063275294.1"/>
</dbReference>
<dbReference type="RefSeq" id="XP_063131365.1">
    <property type="nucleotide sequence ID" value="XM_063275295.1"/>
</dbReference>
<dbReference type="SMR" id="Q6AYF6"/>
<dbReference type="FunCoup" id="Q6AYF6">
    <property type="interactions" value="1301"/>
</dbReference>
<dbReference type="STRING" id="10116.ENSRNOP00000024624"/>
<dbReference type="GlyCosmos" id="Q6AYF6">
    <property type="glycosylation" value="1 site, No reported glycans"/>
</dbReference>
<dbReference type="GlyGen" id="Q6AYF6">
    <property type="glycosylation" value="1 site"/>
</dbReference>
<dbReference type="PhosphoSitePlus" id="Q6AYF6"/>
<dbReference type="PaxDb" id="10116-ENSRNOP00000024624"/>
<dbReference type="GeneID" id="306253"/>
<dbReference type="KEGG" id="rno:306253"/>
<dbReference type="UCSC" id="RGD:1359293">
    <property type="organism name" value="rat"/>
</dbReference>
<dbReference type="AGR" id="RGD:1359293"/>
<dbReference type="CTD" id="55830"/>
<dbReference type="RGD" id="1359293">
    <property type="gene designation" value="Glt8d1"/>
</dbReference>
<dbReference type="VEuPathDB" id="HostDB:ENSRNOG00000018179"/>
<dbReference type="eggNOG" id="ENOG502QTN8">
    <property type="taxonomic scope" value="Eukaryota"/>
</dbReference>
<dbReference type="HOGENOM" id="CLU_010770_0_0_1"/>
<dbReference type="InParanoid" id="Q6AYF6"/>
<dbReference type="OrthoDB" id="18459at9989"/>
<dbReference type="PRO" id="PR:Q6AYF6"/>
<dbReference type="Proteomes" id="UP000002494">
    <property type="component" value="Chromosome 16"/>
</dbReference>
<dbReference type="Bgee" id="ENSRNOG00000018179">
    <property type="expression patterns" value="Expressed in pancreas and 20 other cell types or tissues"/>
</dbReference>
<dbReference type="ExpressionAtlas" id="Q6AYF6">
    <property type="expression patterns" value="baseline and differential"/>
</dbReference>
<dbReference type="GO" id="GO:0005794">
    <property type="term" value="C:Golgi apparatus"/>
    <property type="evidence" value="ECO:0000318"/>
    <property type="project" value="GO_Central"/>
</dbReference>
<dbReference type="GO" id="GO:0016020">
    <property type="term" value="C:membrane"/>
    <property type="evidence" value="ECO:0007669"/>
    <property type="project" value="UniProtKB-SubCell"/>
</dbReference>
<dbReference type="GO" id="GO:0008194">
    <property type="term" value="F:UDP-glycosyltransferase activity"/>
    <property type="evidence" value="ECO:0007669"/>
    <property type="project" value="UniProtKB-ARBA"/>
</dbReference>
<dbReference type="CDD" id="cd06429">
    <property type="entry name" value="GT8_like_1"/>
    <property type="match status" value="1"/>
</dbReference>
<dbReference type="FunFam" id="3.90.550.10:FF:000069">
    <property type="entry name" value="Glycosyltransferase 8 domain-containing protein 1"/>
    <property type="match status" value="1"/>
</dbReference>
<dbReference type="Gene3D" id="3.90.550.10">
    <property type="entry name" value="Spore Coat Polysaccharide Biosynthesis Protein SpsA, Chain A"/>
    <property type="match status" value="1"/>
</dbReference>
<dbReference type="InterPro" id="IPR002495">
    <property type="entry name" value="Glyco_trans_8"/>
</dbReference>
<dbReference type="InterPro" id="IPR050748">
    <property type="entry name" value="Glycosyltrans_8_dom-fam"/>
</dbReference>
<dbReference type="InterPro" id="IPR029044">
    <property type="entry name" value="Nucleotide-diphossugar_trans"/>
</dbReference>
<dbReference type="PANTHER" id="PTHR13778">
    <property type="entry name" value="GLYCOSYLTRANSFERASE 8 DOMAIN-CONTAINING PROTEIN"/>
    <property type="match status" value="1"/>
</dbReference>
<dbReference type="PANTHER" id="PTHR13778:SF3">
    <property type="entry name" value="GLYCOSYLTRANSFERASE 8 DOMAIN-CONTAINING PROTEIN 1"/>
    <property type="match status" value="1"/>
</dbReference>
<dbReference type="Pfam" id="PF01501">
    <property type="entry name" value="Glyco_transf_8"/>
    <property type="match status" value="1"/>
</dbReference>
<dbReference type="SUPFAM" id="SSF53448">
    <property type="entry name" value="Nucleotide-diphospho-sugar transferases"/>
    <property type="match status" value="1"/>
</dbReference>
<comment type="subcellular location">
    <subcellularLocation>
        <location evidence="2">Membrane</location>
        <topology evidence="2">Single-pass type II membrane protein</topology>
    </subcellularLocation>
</comment>
<comment type="similarity">
    <text evidence="2">Belongs to the glycosyltransferase 8 family.</text>
</comment>
<proteinExistence type="evidence at transcript level"/>
<evidence type="ECO:0000255" key="1"/>
<evidence type="ECO:0000305" key="2"/>
<sequence length="371" mass="42135">MSFRKVTIIIWALAVILFLLALHHNFLSLSSLLRNDVSDSGIVGLQPIDFTANFHQHPVNERQEEIPVVIAASEDRLGGTIAAINSIHQNTRSNVIFYIVTFNRTADHLRSWLNSGSLKSIRYKIVNFDTKLLEGKVKEDPDQGESMKPLTFARFYLPILVPSAKKAIYMDDDVIVQGDILALYNTPLKPGHAAAFSEDCDSASTKVMIRGAGNQYNYIGYLDYKKERIRKLSMKASTCSFNPGVFVANLTEWKRQNVTNQLEKWMKLNVEEGLYSRTLAGSITTPPLLIVFYQQHSTIDPMWNVRHLGSSAGKRYSPQFVKAAKLLHWNGHFKPWGRAASYADVWEKWYIPDPTGKFSLIRRHMDTSNIK</sequence>